<proteinExistence type="inferred from homology"/>
<evidence type="ECO:0000255" key="1">
    <source>
        <dbReference type="HAMAP-Rule" id="MF_00203"/>
    </source>
</evidence>
<accession>Q5HQ28</accession>
<feature type="chain" id="PRO_0000138344" description="UvrABC system protein C">
    <location>
        <begin position="1"/>
        <end position="594"/>
    </location>
</feature>
<feature type="domain" description="GIY-YIG" evidence="1">
    <location>
        <begin position="17"/>
        <end position="94"/>
    </location>
</feature>
<feature type="domain" description="UVR" evidence="1">
    <location>
        <begin position="199"/>
        <end position="234"/>
    </location>
</feature>
<comment type="function">
    <text evidence="1">The UvrABC repair system catalyzes the recognition and processing of DNA lesions. UvrC both incises the 5' and 3' sides of the lesion. The N-terminal half is responsible for the 3' incision and the C-terminal half is responsible for the 5' incision.</text>
</comment>
<comment type="subunit">
    <text evidence="1">Interacts with UvrB in an incision complex.</text>
</comment>
<comment type="subcellular location">
    <subcellularLocation>
        <location evidence="1">Cytoplasm</location>
    </subcellularLocation>
</comment>
<comment type="similarity">
    <text evidence="1">Belongs to the UvrC family.</text>
</comment>
<sequence length="594" mass="68828">MEEYQKKIKEKLNVVPLEPGCYLMKDRNDQVIYVGKAKRLRNRLRSYFTGAHDAKTTRLVGEIRNFEFIVTSSETESLLLELNLIKQYQPRYNILLKDDKSYPFIKITKEKHPRLLVTRTVKKNSGKYFGPYPNAYSAQETKKLLDRIYPFRKCDNMPDKLCLYYHIGQCMGPCVYDVDLEKYAQMTKEITDFLNGEDKTILNHLEERMNKASEQLDFEQAKEYRDMIQHIHNLTKKQKIMSSDNTIRDVFGYSVSKGWMCVQVFFVRQGNMIKRDATMIPIQQTEEEEFYTFIGQFYSLNQHLIPKEVHVPKNLDKDIIQSVVDTKIVQPVRGAKKDMINLANHNAEVQLDNKFELIARDESRTIKAIEELGERMGIQTPIRIEAFDNSNIQGVDPVSAMVTFVDGKPHKKDYRKYKIKTVEGPDDYKSMREVVRRRYTRVLNEGLPLPDLIIVDGGKGHMNGVMDVLENELGLDIPVAGLQKNDKHQTSELLYGASAEIVPLKKNSQAFYLLHRIQDEVHRFAITFHRQTRQKTGLKSVLDDIDGIGTKRKTSLLRTFGSIKKMKEASFDELRQAGLPEKVAKNLQNALQNK</sequence>
<dbReference type="EMBL" id="CP000029">
    <property type="protein sequence ID" value="AAW54102.1"/>
    <property type="molecule type" value="Genomic_DNA"/>
</dbReference>
<dbReference type="RefSeq" id="WP_002486269.1">
    <property type="nucleotide sequence ID" value="NC_002976.3"/>
</dbReference>
<dbReference type="SMR" id="Q5HQ28"/>
<dbReference type="STRING" id="176279.SERP0729"/>
<dbReference type="KEGG" id="ser:SERP0729"/>
<dbReference type="eggNOG" id="COG0322">
    <property type="taxonomic scope" value="Bacteria"/>
</dbReference>
<dbReference type="HOGENOM" id="CLU_014841_3_2_9"/>
<dbReference type="Proteomes" id="UP000000531">
    <property type="component" value="Chromosome"/>
</dbReference>
<dbReference type="GO" id="GO:0005737">
    <property type="term" value="C:cytoplasm"/>
    <property type="evidence" value="ECO:0007669"/>
    <property type="project" value="UniProtKB-SubCell"/>
</dbReference>
<dbReference type="GO" id="GO:0009380">
    <property type="term" value="C:excinuclease repair complex"/>
    <property type="evidence" value="ECO:0007669"/>
    <property type="project" value="InterPro"/>
</dbReference>
<dbReference type="GO" id="GO:0003677">
    <property type="term" value="F:DNA binding"/>
    <property type="evidence" value="ECO:0007669"/>
    <property type="project" value="UniProtKB-UniRule"/>
</dbReference>
<dbReference type="GO" id="GO:0009381">
    <property type="term" value="F:excinuclease ABC activity"/>
    <property type="evidence" value="ECO:0007669"/>
    <property type="project" value="UniProtKB-UniRule"/>
</dbReference>
<dbReference type="GO" id="GO:0006289">
    <property type="term" value="P:nucleotide-excision repair"/>
    <property type="evidence" value="ECO:0007669"/>
    <property type="project" value="UniProtKB-UniRule"/>
</dbReference>
<dbReference type="GO" id="GO:0009432">
    <property type="term" value="P:SOS response"/>
    <property type="evidence" value="ECO:0007669"/>
    <property type="project" value="UniProtKB-UniRule"/>
</dbReference>
<dbReference type="CDD" id="cd10434">
    <property type="entry name" value="GIY-YIG_UvrC_Cho"/>
    <property type="match status" value="1"/>
</dbReference>
<dbReference type="FunFam" id="3.30.420.340:FF:000002">
    <property type="entry name" value="UvrABC system protein C"/>
    <property type="match status" value="1"/>
</dbReference>
<dbReference type="FunFam" id="3.40.1440.10:FF:000001">
    <property type="entry name" value="UvrABC system protein C"/>
    <property type="match status" value="1"/>
</dbReference>
<dbReference type="FunFam" id="4.10.860.10:FF:000007">
    <property type="entry name" value="UvrABC system protein C"/>
    <property type="match status" value="1"/>
</dbReference>
<dbReference type="Gene3D" id="1.10.150.20">
    <property type="entry name" value="5' to 3' exonuclease, C-terminal subdomain"/>
    <property type="match status" value="1"/>
</dbReference>
<dbReference type="Gene3D" id="3.40.1440.10">
    <property type="entry name" value="GIY-YIG endonuclease"/>
    <property type="match status" value="1"/>
</dbReference>
<dbReference type="Gene3D" id="4.10.860.10">
    <property type="entry name" value="UVR domain"/>
    <property type="match status" value="1"/>
</dbReference>
<dbReference type="Gene3D" id="3.30.420.340">
    <property type="entry name" value="UvrC, RNAse H endonuclease domain"/>
    <property type="match status" value="1"/>
</dbReference>
<dbReference type="HAMAP" id="MF_00203">
    <property type="entry name" value="UvrC"/>
    <property type="match status" value="1"/>
</dbReference>
<dbReference type="InterPro" id="IPR000305">
    <property type="entry name" value="GIY-YIG_endonuc"/>
</dbReference>
<dbReference type="InterPro" id="IPR035901">
    <property type="entry name" value="GIY-YIG_endonuc_sf"/>
</dbReference>
<dbReference type="InterPro" id="IPR047296">
    <property type="entry name" value="GIY-YIG_UvrC_Cho"/>
</dbReference>
<dbReference type="InterPro" id="IPR010994">
    <property type="entry name" value="RuvA_2-like"/>
</dbReference>
<dbReference type="InterPro" id="IPR001943">
    <property type="entry name" value="UVR_dom"/>
</dbReference>
<dbReference type="InterPro" id="IPR036876">
    <property type="entry name" value="UVR_dom_sf"/>
</dbReference>
<dbReference type="InterPro" id="IPR050066">
    <property type="entry name" value="UvrABC_protein_C"/>
</dbReference>
<dbReference type="InterPro" id="IPR004791">
    <property type="entry name" value="UvrC"/>
</dbReference>
<dbReference type="InterPro" id="IPR001162">
    <property type="entry name" value="UvrC_RNase_H_dom"/>
</dbReference>
<dbReference type="InterPro" id="IPR038476">
    <property type="entry name" value="UvrC_RNase_H_dom_sf"/>
</dbReference>
<dbReference type="NCBIfam" id="TIGR00194">
    <property type="entry name" value="uvrC"/>
    <property type="match status" value="1"/>
</dbReference>
<dbReference type="PANTHER" id="PTHR30562:SF1">
    <property type="entry name" value="UVRABC SYSTEM PROTEIN C"/>
    <property type="match status" value="1"/>
</dbReference>
<dbReference type="PANTHER" id="PTHR30562">
    <property type="entry name" value="UVRC/OXIDOREDUCTASE"/>
    <property type="match status" value="1"/>
</dbReference>
<dbReference type="Pfam" id="PF01541">
    <property type="entry name" value="GIY-YIG"/>
    <property type="match status" value="1"/>
</dbReference>
<dbReference type="Pfam" id="PF14520">
    <property type="entry name" value="HHH_5"/>
    <property type="match status" value="1"/>
</dbReference>
<dbReference type="Pfam" id="PF02151">
    <property type="entry name" value="UVR"/>
    <property type="match status" value="1"/>
</dbReference>
<dbReference type="Pfam" id="PF22920">
    <property type="entry name" value="UvrC_RNaseH"/>
    <property type="match status" value="1"/>
</dbReference>
<dbReference type="Pfam" id="PF08459">
    <property type="entry name" value="UvrC_RNaseH_dom"/>
    <property type="match status" value="1"/>
</dbReference>
<dbReference type="SMART" id="SM00465">
    <property type="entry name" value="GIYc"/>
    <property type="match status" value="1"/>
</dbReference>
<dbReference type="SUPFAM" id="SSF46600">
    <property type="entry name" value="C-terminal UvrC-binding domain of UvrB"/>
    <property type="match status" value="1"/>
</dbReference>
<dbReference type="SUPFAM" id="SSF82771">
    <property type="entry name" value="GIY-YIG endonuclease"/>
    <property type="match status" value="1"/>
</dbReference>
<dbReference type="SUPFAM" id="SSF47781">
    <property type="entry name" value="RuvA domain 2-like"/>
    <property type="match status" value="1"/>
</dbReference>
<dbReference type="PROSITE" id="PS50164">
    <property type="entry name" value="GIY_YIG"/>
    <property type="match status" value="1"/>
</dbReference>
<dbReference type="PROSITE" id="PS50151">
    <property type="entry name" value="UVR"/>
    <property type="match status" value="1"/>
</dbReference>
<dbReference type="PROSITE" id="PS50165">
    <property type="entry name" value="UVRC"/>
    <property type="match status" value="1"/>
</dbReference>
<reference key="1">
    <citation type="journal article" date="2005" name="J. Bacteriol.">
        <title>Insights on evolution of virulence and resistance from the complete genome analysis of an early methicillin-resistant Staphylococcus aureus strain and a biofilm-producing methicillin-resistant Staphylococcus epidermidis strain.</title>
        <authorList>
            <person name="Gill S.R."/>
            <person name="Fouts D.E."/>
            <person name="Archer G.L."/>
            <person name="Mongodin E.F."/>
            <person name="DeBoy R.T."/>
            <person name="Ravel J."/>
            <person name="Paulsen I.T."/>
            <person name="Kolonay J.F."/>
            <person name="Brinkac L.M."/>
            <person name="Beanan M.J."/>
            <person name="Dodson R.J."/>
            <person name="Daugherty S.C."/>
            <person name="Madupu R."/>
            <person name="Angiuoli S.V."/>
            <person name="Durkin A.S."/>
            <person name="Haft D.H."/>
            <person name="Vamathevan J.J."/>
            <person name="Khouri H."/>
            <person name="Utterback T.R."/>
            <person name="Lee C."/>
            <person name="Dimitrov G."/>
            <person name="Jiang L."/>
            <person name="Qin H."/>
            <person name="Weidman J."/>
            <person name="Tran K."/>
            <person name="Kang K.H."/>
            <person name="Hance I.R."/>
            <person name="Nelson K.E."/>
            <person name="Fraser C.M."/>
        </authorList>
    </citation>
    <scope>NUCLEOTIDE SEQUENCE [LARGE SCALE GENOMIC DNA]</scope>
    <source>
        <strain>ATCC 35984 / DSM 28319 / BCRC 17069 / CCUG 31568 / BM 3577 / RP62A</strain>
    </source>
</reference>
<protein>
    <recommendedName>
        <fullName evidence="1">UvrABC system protein C</fullName>
        <shortName evidence="1">Protein UvrC</shortName>
    </recommendedName>
    <alternativeName>
        <fullName evidence="1">Excinuclease ABC subunit C</fullName>
    </alternativeName>
</protein>
<organism>
    <name type="scientific">Staphylococcus epidermidis (strain ATCC 35984 / DSM 28319 / BCRC 17069 / CCUG 31568 / BM 3577 / RP62A)</name>
    <dbReference type="NCBI Taxonomy" id="176279"/>
    <lineage>
        <taxon>Bacteria</taxon>
        <taxon>Bacillati</taxon>
        <taxon>Bacillota</taxon>
        <taxon>Bacilli</taxon>
        <taxon>Bacillales</taxon>
        <taxon>Staphylococcaceae</taxon>
        <taxon>Staphylococcus</taxon>
    </lineage>
</organism>
<keyword id="KW-0963">Cytoplasm</keyword>
<keyword id="KW-0227">DNA damage</keyword>
<keyword id="KW-0228">DNA excision</keyword>
<keyword id="KW-0234">DNA repair</keyword>
<keyword id="KW-0267">Excision nuclease</keyword>
<keyword id="KW-1185">Reference proteome</keyword>
<keyword id="KW-0742">SOS response</keyword>
<gene>
    <name evidence="1" type="primary">uvrC</name>
    <name type="ordered locus">SERP0729</name>
</gene>
<name>UVRC_STAEQ</name>